<feature type="chain" id="PRO_1000054505" description="Large ribosomal subunit protein uL15">
    <location>
        <begin position="1"/>
        <end position="163"/>
    </location>
</feature>
<sequence length="163" mass="18155">MKLNTLFNLNGAKKCSKRIGRGIGSGKGKTCGRGAKGQKSRAKVARGFEGGQTPLIKRLPKRGFKSMNKRNYNIINIITILRLVKANKIEYGAVIDKLLLLKLKMLKKSINKIKLLWANPSSLVLSSEDISLLTKLDLQFNLDEYSISARKNIIKLGMKVINN</sequence>
<gene>
    <name evidence="1" type="primary">rplO</name>
    <name type="ordered locus">OTBS_0358</name>
</gene>
<dbReference type="EMBL" id="AM494475">
    <property type="protein sequence ID" value="CAM79424.1"/>
    <property type="molecule type" value="Genomic_DNA"/>
</dbReference>
<dbReference type="RefSeq" id="WP_011944422.1">
    <property type="nucleotide sequence ID" value="NC_009488.1"/>
</dbReference>
<dbReference type="SMR" id="A5CCJ4"/>
<dbReference type="KEGG" id="ots:OTBS_0358"/>
<dbReference type="eggNOG" id="COG0200">
    <property type="taxonomic scope" value="Bacteria"/>
</dbReference>
<dbReference type="HOGENOM" id="CLU_055188_4_2_5"/>
<dbReference type="Proteomes" id="UP000001565">
    <property type="component" value="Chromosome"/>
</dbReference>
<dbReference type="GO" id="GO:0022625">
    <property type="term" value="C:cytosolic large ribosomal subunit"/>
    <property type="evidence" value="ECO:0007669"/>
    <property type="project" value="TreeGrafter"/>
</dbReference>
<dbReference type="GO" id="GO:0019843">
    <property type="term" value="F:rRNA binding"/>
    <property type="evidence" value="ECO:0007669"/>
    <property type="project" value="UniProtKB-UniRule"/>
</dbReference>
<dbReference type="GO" id="GO:0003735">
    <property type="term" value="F:structural constituent of ribosome"/>
    <property type="evidence" value="ECO:0007669"/>
    <property type="project" value="InterPro"/>
</dbReference>
<dbReference type="GO" id="GO:0006412">
    <property type="term" value="P:translation"/>
    <property type="evidence" value="ECO:0007669"/>
    <property type="project" value="UniProtKB-UniRule"/>
</dbReference>
<dbReference type="HAMAP" id="MF_01341">
    <property type="entry name" value="Ribosomal_uL15"/>
    <property type="match status" value="1"/>
</dbReference>
<dbReference type="InterPro" id="IPR030878">
    <property type="entry name" value="Ribosomal_uL15"/>
</dbReference>
<dbReference type="InterPro" id="IPR036227">
    <property type="entry name" value="Ribosomal_uL15/eL18_sf"/>
</dbReference>
<dbReference type="InterPro" id="IPR005749">
    <property type="entry name" value="Ribosomal_uL15_bac-type"/>
</dbReference>
<dbReference type="NCBIfam" id="TIGR01071">
    <property type="entry name" value="rplO_bact"/>
    <property type="match status" value="1"/>
</dbReference>
<dbReference type="PANTHER" id="PTHR12934">
    <property type="entry name" value="50S RIBOSOMAL PROTEIN L15"/>
    <property type="match status" value="1"/>
</dbReference>
<dbReference type="PANTHER" id="PTHR12934:SF11">
    <property type="entry name" value="LARGE RIBOSOMAL SUBUNIT PROTEIN UL15M"/>
    <property type="match status" value="1"/>
</dbReference>
<dbReference type="SUPFAM" id="SSF52080">
    <property type="entry name" value="Ribosomal proteins L15p and L18e"/>
    <property type="match status" value="1"/>
</dbReference>
<reference key="1">
    <citation type="journal article" date="2007" name="Proc. Natl. Acad. Sci. U.S.A.">
        <title>The Orientia tsutsugamushi genome reveals massive proliferation of conjugative type IV secretion system and host-cell interaction genes.</title>
        <authorList>
            <person name="Cho N.-H."/>
            <person name="Kim H.-R."/>
            <person name="Lee J.-H."/>
            <person name="Kim S.-Y."/>
            <person name="Kim J."/>
            <person name="Cha S."/>
            <person name="Kim S.-Y."/>
            <person name="Darby A.C."/>
            <person name="Fuxelius H.-H."/>
            <person name="Yin J."/>
            <person name="Kim J.H."/>
            <person name="Kim J."/>
            <person name="Lee S.J."/>
            <person name="Koh Y.-S."/>
            <person name="Jang W.-J."/>
            <person name="Park K.-H."/>
            <person name="Andersson S.G.E."/>
            <person name="Choi M.-S."/>
            <person name="Kim I.-S."/>
        </authorList>
    </citation>
    <scope>NUCLEOTIDE SEQUENCE [LARGE SCALE GENOMIC DNA]</scope>
    <source>
        <strain>Boryong</strain>
    </source>
</reference>
<name>RL15_ORITB</name>
<organism>
    <name type="scientific">Orientia tsutsugamushi (strain Boryong)</name>
    <name type="common">Rickettsia tsutsugamushi</name>
    <dbReference type="NCBI Taxonomy" id="357244"/>
    <lineage>
        <taxon>Bacteria</taxon>
        <taxon>Pseudomonadati</taxon>
        <taxon>Pseudomonadota</taxon>
        <taxon>Alphaproteobacteria</taxon>
        <taxon>Rickettsiales</taxon>
        <taxon>Rickettsiaceae</taxon>
        <taxon>Rickettsieae</taxon>
        <taxon>Orientia</taxon>
    </lineage>
</organism>
<keyword id="KW-1185">Reference proteome</keyword>
<keyword id="KW-0687">Ribonucleoprotein</keyword>
<keyword id="KW-0689">Ribosomal protein</keyword>
<keyword id="KW-0694">RNA-binding</keyword>
<keyword id="KW-0699">rRNA-binding</keyword>
<comment type="function">
    <text evidence="1">Binds to the 23S rRNA.</text>
</comment>
<comment type="subunit">
    <text evidence="1">Part of the 50S ribosomal subunit.</text>
</comment>
<comment type="similarity">
    <text evidence="1">Belongs to the universal ribosomal protein uL15 family.</text>
</comment>
<evidence type="ECO:0000255" key="1">
    <source>
        <dbReference type="HAMAP-Rule" id="MF_01341"/>
    </source>
</evidence>
<evidence type="ECO:0000305" key="2"/>
<accession>A5CCJ4</accession>
<protein>
    <recommendedName>
        <fullName evidence="1">Large ribosomal subunit protein uL15</fullName>
    </recommendedName>
    <alternativeName>
        <fullName evidence="2">50S ribosomal protein L15</fullName>
    </alternativeName>
</protein>
<proteinExistence type="inferred from homology"/>